<gene>
    <name evidence="1" type="primary">pepT</name>
    <name type="ordered locus">SSA_1326</name>
</gene>
<name>PEPT_STRSV</name>
<feature type="chain" id="PRO_1000017855" description="Peptidase T">
    <location>
        <begin position="1"/>
        <end position="407"/>
    </location>
</feature>
<feature type="active site" evidence="1">
    <location>
        <position position="83"/>
    </location>
</feature>
<feature type="active site" description="Proton acceptor" evidence="1">
    <location>
        <position position="176"/>
    </location>
</feature>
<feature type="binding site" evidence="1">
    <location>
        <position position="81"/>
    </location>
    <ligand>
        <name>Zn(2+)</name>
        <dbReference type="ChEBI" id="CHEBI:29105"/>
        <label>1</label>
    </ligand>
</feature>
<feature type="binding site" evidence="1">
    <location>
        <position position="142"/>
    </location>
    <ligand>
        <name>Zn(2+)</name>
        <dbReference type="ChEBI" id="CHEBI:29105"/>
        <label>1</label>
    </ligand>
</feature>
<feature type="binding site" evidence="1">
    <location>
        <position position="142"/>
    </location>
    <ligand>
        <name>Zn(2+)</name>
        <dbReference type="ChEBI" id="CHEBI:29105"/>
        <label>2</label>
    </ligand>
</feature>
<feature type="binding site" evidence="1">
    <location>
        <position position="177"/>
    </location>
    <ligand>
        <name>Zn(2+)</name>
        <dbReference type="ChEBI" id="CHEBI:29105"/>
        <label>2</label>
    </ligand>
</feature>
<feature type="binding site" evidence="1">
    <location>
        <position position="199"/>
    </location>
    <ligand>
        <name>Zn(2+)</name>
        <dbReference type="ChEBI" id="CHEBI:29105"/>
        <label>1</label>
    </ligand>
</feature>
<feature type="binding site" evidence="1">
    <location>
        <position position="381"/>
    </location>
    <ligand>
        <name>Zn(2+)</name>
        <dbReference type="ChEBI" id="CHEBI:29105"/>
        <label>2</label>
    </ligand>
</feature>
<comment type="function">
    <text evidence="1">Cleaves the N-terminal amino acid of tripeptides.</text>
</comment>
<comment type="catalytic activity">
    <reaction evidence="1">
        <text>Release of the N-terminal residue from a tripeptide.</text>
        <dbReference type="EC" id="3.4.11.4"/>
    </reaction>
</comment>
<comment type="cofactor">
    <cofactor evidence="1">
        <name>Zn(2+)</name>
        <dbReference type="ChEBI" id="CHEBI:29105"/>
    </cofactor>
    <text evidence="1">Binds 2 Zn(2+) ions per subunit.</text>
</comment>
<comment type="subcellular location">
    <subcellularLocation>
        <location evidence="1">Cytoplasm</location>
    </subcellularLocation>
</comment>
<comment type="similarity">
    <text evidence="1">Belongs to the peptidase M20B family.</text>
</comment>
<organism>
    <name type="scientific">Streptococcus sanguinis (strain SK36)</name>
    <dbReference type="NCBI Taxonomy" id="388919"/>
    <lineage>
        <taxon>Bacteria</taxon>
        <taxon>Bacillati</taxon>
        <taxon>Bacillota</taxon>
        <taxon>Bacilli</taxon>
        <taxon>Lactobacillales</taxon>
        <taxon>Streptococcaceae</taxon>
        <taxon>Streptococcus</taxon>
    </lineage>
</organism>
<evidence type="ECO:0000255" key="1">
    <source>
        <dbReference type="HAMAP-Rule" id="MF_00550"/>
    </source>
</evidence>
<accession>A3CNH0</accession>
<protein>
    <recommendedName>
        <fullName evidence="1">Peptidase T</fullName>
        <ecNumber evidence="1">3.4.11.4</ecNumber>
    </recommendedName>
    <alternativeName>
        <fullName evidence="1">Aminotripeptidase</fullName>
        <shortName evidence="1">Tripeptidase</shortName>
    </alternativeName>
    <alternativeName>
        <fullName evidence="1">Tripeptide aminopeptidase</fullName>
    </alternativeName>
</protein>
<sequence length="407" mass="45071">MKYPNLLERFLTYVKVNTRSDETSTTTPSTQSQVDFAKNVLIPEMKRVGLENVYYLPNGFAIGTLPANDPSFTRKIGFISHMDTADFNAENIQPQVIENYDGGVIPLGQSGFNLDPADFASLHKYKGQTLITTDGTTLLGADDKSGIAEIMTAIEYLSAHPEIKHGEIRVGFGPDEEIGIGADKFDAEDFDVDFAYTVDGGPLGELQYETFSAAGAELTFQGRNVHPGTAKDQMVNALQLAIDFHSQLPETDRPEKTEGYQGFYHLMNLSGTVEEAHASYIVRDFETEAFENRKAAMKVIAEKMNQELGSERVSLTLKDQYYNMKQVIEKDMTPIHIAKAVMENLDIQPIIEPIRGGTDGSKISFMGIPTPNLFAGGENMHGRFEYVSLETMERAVDTIIGIVSYQD</sequence>
<reference key="1">
    <citation type="journal article" date="2007" name="J. Bacteriol.">
        <title>Genome of the opportunistic pathogen Streptococcus sanguinis.</title>
        <authorList>
            <person name="Xu P."/>
            <person name="Alves J.M."/>
            <person name="Kitten T."/>
            <person name="Brown A."/>
            <person name="Chen Z."/>
            <person name="Ozaki L.S."/>
            <person name="Manque P."/>
            <person name="Ge X."/>
            <person name="Serrano M.G."/>
            <person name="Puiu D."/>
            <person name="Hendricks S."/>
            <person name="Wang Y."/>
            <person name="Chaplin M.D."/>
            <person name="Akan D."/>
            <person name="Paik S."/>
            <person name="Peterson D.L."/>
            <person name="Macrina F.L."/>
            <person name="Buck G.A."/>
        </authorList>
    </citation>
    <scope>NUCLEOTIDE SEQUENCE [LARGE SCALE GENOMIC DNA]</scope>
    <source>
        <strain>SK36</strain>
    </source>
</reference>
<dbReference type="EC" id="3.4.11.4" evidence="1"/>
<dbReference type="EMBL" id="CP000387">
    <property type="protein sequence ID" value="ABN44725.1"/>
    <property type="molecule type" value="Genomic_DNA"/>
</dbReference>
<dbReference type="RefSeq" id="WP_011837055.1">
    <property type="nucleotide sequence ID" value="NC_009009.1"/>
</dbReference>
<dbReference type="RefSeq" id="YP_001035275.1">
    <property type="nucleotide sequence ID" value="NC_009009.1"/>
</dbReference>
<dbReference type="SMR" id="A3CNH0"/>
<dbReference type="STRING" id="388919.SSA_1326"/>
<dbReference type="MEROPS" id="M20.003"/>
<dbReference type="KEGG" id="ssa:SSA_1326"/>
<dbReference type="PATRIC" id="fig|388919.9.peg.1262"/>
<dbReference type="eggNOG" id="COG2195">
    <property type="taxonomic scope" value="Bacteria"/>
</dbReference>
<dbReference type="HOGENOM" id="CLU_053676_0_0_9"/>
<dbReference type="OrthoDB" id="9804934at2"/>
<dbReference type="Proteomes" id="UP000002148">
    <property type="component" value="Chromosome"/>
</dbReference>
<dbReference type="GO" id="GO:0005829">
    <property type="term" value="C:cytosol"/>
    <property type="evidence" value="ECO:0007669"/>
    <property type="project" value="TreeGrafter"/>
</dbReference>
<dbReference type="GO" id="GO:0008237">
    <property type="term" value="F:metallopeptidase activity"/>
    <property type="evidence" value="ECO:0007669"/>
    <property type="project" value="UniProtKB-KW"/>
</dbReference>
<dbReference type="GO" id="GO:0045148">
    <property type="term" value="F:tripeptide aminopeptidase activity"/>
    <property type="evidence" value="ECO:0007669"/>
    <property type="project" value="UniProtKB-UniRule"/>
</dbReference>
<dbReference type="GO" id="GO:0008270">
    <property type="term" value="F:zinc ion binding"/>
    <property type="evidence" value="ECO:0007669"/>
    <property type="project" value="UniProtKB-UniRule"/>
</dbReference>
<dbReference type="GO" id="GO:0043171">
    <property type="term" value="P:peptide catabolic process"/>
    <property type="evidence" value="ECO:0007669"/>
    <property type="project" value="UniProtKB-UniRule"/>
</dbReference>
<dbReference type="GO" id="GO:0006508">
    <property type="term" value="P:proteolysis"/>
    <property type="evidence" value="ECO:0007669"/>
    <property type="project" value="UniProtKB-UniRule"/>
</dbReference>
<dbReference type="CDD" id="cd03892">
    <property type="entry name" value="M20_peptT"/>
    <property type="match status" value="1"/>
</dbReference>
<dbReference type="FunFam" id="3.30.70.360:FF:000002">
    <property type="entry name" value="Peptidase T"/>
    <property type="match status" value="1"/>
</dbReference>
<dbReference type="Gene3D" id="3.30.70.360">
    <property type="match status" value="1"/>
</dbReference>
<dbReference type="Gene3D" id="3.40.630.10">
    <property type="entry name" value="Zn peptidases"/>
    <property type="match status" value="1"/>
</dbReference>
<dbReference type="HAMAP" id="MF_00550">
    <property type="entry name" value="Aminopeptidase_M20"/>
    <property type="match status" value="1"/>
</dbReference>
<dbReference type="InterPro" id="IPR001261">
    <property type="entry name" value="ArgE/DapE_CS"/>
</dbReference>
<dbReference type="InterPro" id="IPR036264">
    <property type="entry name" value="Bact_exopeptidase_dim_dom"/>
</dbReference>
<dbReference type="InterPro" id="IPR002933">
    <property type="entry name" value="Peptidase_M20"/>
</dbReference>
<dbReference type="InterPro" id="IPR011650">
    <property type="entry name" value="Peptidase_M20_dimer"/>
</dbReference>
<dbReference type="InterPro" id="IPR010161">
    <property type="entry name" value="Peptidase_M20B"/>
</dbReference>
<dbReference type="NCBIfam" id="TIGR01882">
    <property type="entry name" value="peptidase-T"/>
    <property type="match status" value="1"/>
</dbReference>
<dbReference type="NCBIfam" id="NF003976">
    <property type="entry name" value="PRK05469.1"/>
    <property type="match status" value="1"/>
</dbReference>
<dbReference type="NCBIfam" id="NF009920">
    <property type="entry name" value="PRK13381.1"/>
    <property type="match status" value="1"/>
</dbReference>
<dbReference type="PANTHER" id="PTHR42994">
    <property type="entry name" value="PEPTIDASE T"/>
    <property type="match status" value="1"/>
</dbReference>
<dbReference type="PANTHER" id="PTHR42994:SF1">
    <property type="entry name" value="PEPTIDASE T"/>
    <property type="match status" value="1"/>
</dbReference>
<dbReference type="Pfam" id="PF07687">
    <property type="entry name" value="M20_dimer"/>
    <property type="match status" value="1"/>
</dbReference>
<dbReference type="Pfam" id="PF01546">
    <property type="entry name" value="Peptidase_M20"/>
    <property type="match status" value="1"/>
</dbReference>
<dbReference type="PIRSF" id="PIRSF037215">
    <property type="entry name" value="Peptidase_M20B"/>
    <property type="match status" value="1"/>
</dbReference>
<dbReference type="SUPFAM" id="SSF55031">
    <property type="entry name" value="Bacterial exopeptidase dimerisation domain"/>
    <property type="match status" value="1"/>
</dbReference>
<dbReference type="SUPFAM" id="SSF53187">
    <property type="entry name" value="Zn-dependent exopeptidases"/>
    <property type="match status" value="1"/>
</dbReference>
<dbReference type="PROSITE" id="PS00758">
    <property type="entry name" value="ARGE_DAPE_CPG2_1"/>
    <property type="match status" value="1"/>
</dbReference>
<dbReference type="PROSITE" id="PS00759">
    <property type="entry name" value="ARGE_DAPE_CPG2_2"/>
    <property type="match status" value="1"/>
</dbReference>
<keyword id="KW-0031">Aminopeptidase</keyword>
<keyword id="KW-0963">Cytoplasm</keyword>
<keyword id="KW-0378">Hydrolase</keyword>
<keyword id="KW-0479">Metal-binding</keyword>
<keyword id="KW-0482">Metalloprotease</keyword>
<keyword id="KW-0645">Protease</keyword>
<keyword id="KW-1185">Reference proteome</keyword>
<keyword id="KW-0862">Zinc</keyword>
<proteinExistence type="inferred from homology"/>